<reference key="1">
    <citation type="journal article" date="1997" name="DNA Res.">
        <title>Structural analysis of Arabidopsis thaliana chromosome 5. III. Sequence features of the regions of 1,191,918 bp covered by seventeen physically assigned P1 clones.</title>
        <authorList>
            <person name="Nakamura Y."/>
            <person name="Sato S."/>
            <person name="Kaneko T."/>
            <person name="Kotani H."/>
            <person name="Asamizu E."/>
            <person name="Miyajima N."/>
            <person name="Tabata S."/>
        </authorList>
    </citation>
    <scope>NUCLEOTIDE SEQUENCE [LARGE SCALE GENOMIC DNA]</scope>
    <source>
        <strain>cv. Columbia</strain>
    </source>
</reference>
<reference key="2">
    <citation type="journal article" date="2017" name="Plant J.">
        <title>Araport11: a complete reannotation of the Arabidopsis thaliana reference genome.</title>
        <authorList>
            <person name="Cheng C.Y."/>
            <person name="Krishnakumar V."/>
            <person name="Chan A.P."/>
            <person name="Thibaud-Nissen F."/>
            <person name="Schobel S."/>
            <person name="Town C.D."/>
        </authorList>
    </citation>
    <scope>GENOME REANNOTATION</scope>
    <source>
        <strain>cv. Columbia</strain>
    </source>
</reference>
<reference key="3">
    <citation type="submission" date="2004-12" db="EMBL/GenBank/DDBJ databases">
        <title>Arabidopsis ORF clones.</title>
        <authorList>
            <person name="Shinn P."/>
            <person name="Chen H."/>
            <person name="Cheuk R.F."/>
            <person name="Kim C.J."/>
            <person name="Ecker J.R."/>
        </authorList>
    </citation>
    <scope>NUCLEOTIDE SEQUENCE [LARGE SCALE MRNA]</scope>
    <source>
        <strain>cv. Columbia</strain>
    </source>
</reference>
<reference key="4">
    <citation type="journal article" date="2001" name="J. Biol. Chem.">
        <title>Phylogenetic analysis of the UDP-glycosyltransferase multigene family of Arabidopsis thaliana.</title>
        <authorList>
            <person name="Li Y."/>
            <person name="Baldauf S."/>
            <person name="Lim E.K."/>
            <person name="Bowles D.J."/>
        </authorList>
    </citation>
    <scope>GENE FAMILY</scope>
</reference>
<evidence type="ECO:0000250" key="1"/>
<evidence type="ECO:0000305" key="2"/>
<name>U79B6_ARATH</name>
<keyword id="KW-0328">Glycosyltransferase</keyword>
<keyword id="KW-1185">Reference proteome</keyword>
<keyword id="KW-0808">Transferase</keyword>
<accession>Q9FN26</accession>
<organism>
    <name type="scientific">Arabidopsis thaliana</name>
    <name type="common">Mouse-ear cress</name>
    <dbReference type="NCBI Taxonomy" id="3702"/>
    <lineage>
        <taxon>Eukaryota</taxon>
        <taxon>Viridiplantae</taxon>
        <taxon>Streptophyta</taxon>
        <taxon>Embryophyta</taxon>
        <taxon>Tracheophyta</taxon>
        <taxon>Spermatophyta</taxon>
        <taxon>Magnoliopsida</taxon>
        <taxon>eudicotyledons</taxon>
        <taxon>Gunneridae</taxon>
        <taxon>Pentapetalae</taxon>
        <taxon>rosids</taxon>
        <taxon>malvids</taxon>
        <taxon>Brassicales</taxon>
        <taxon>Brassicaceae</taxon>
        <taxon>Camelineae</taxon>
        <taxon>Arabidopsis</taxon>
    </lineage>
</organism>
<proteinExistence type="evidence at transcript level"/>
<comment type="similarity">
    <text evidence="2">Belongs to the UDP-glycosyltransferase family.</text>
</comment>
<dbReference type="EC" id="2.4.1.-"/>
<dbReference type="EMBL" id="AB007644">
    <property type="protein sequence ID" value="BAB10731.1"/>
    <property type="molecule type" value="Genomic_DNA"/>
</dbReference>
<dbReference type="EMBL" id="CP002688">
    <property type="protein sequence ID" value="AED96438.1"/>
    <property type="molecule type" value="Genomic_DNA"/>
</dbReference>
<dbReference type="EMBL" id="BT020273">
    <property type="protein sequence ID" value="AAV84494.1"/>
    <property type="molecule type" value="mRNA"/>
</dbReference>
<dbReference type="EMBL" id="BT020440">
    <property type="protein sequence ID" value="AAW30019.1"/>
    <property type="molecule type" value="mRNA"/>
</dbReference>
<dbReference type="RefSeq" id="NP_200212.1">
    <property type="nucleotide sequence ID" value="NM_124780.3"/>
</dbReference>
<dbReference type="SMR" id="Q9FN26"/>
<dbReference type="FunCoup" id="Q9FN26">
    <property type="interactions" value="11"/>
</dbReference>
<dbReference type="STRING" id="3702.Q9FN26"/>
<dbReference type="CAZy" id="GT1">
    <property type="family name" value="Glycosyltransferase Family 1"/>
</dbReference>
<dbReference type="PaxDb" id="3702-AT5G54010.1"/>
<dbReference type="ProteomicsDB" id="228560"/>
<dbReference type="EnsemblPlants" id="AT5G54010.1">
    <property type="protein sequence ID" value="AT5G54010.1"/>
    <property type="gene ID" value="AT5G54010"/>
</dbReference>
<dbReference type="GeneID" id="835484"/>
<dbReference type="Gramene" id="AT5G54010.1">
    <property type="protein sequence ID" value="AT5G54010.1"/>
    <property type="gene ID" value="AT5G54010"/>
</dbReference>
<dbReference type="KEGG" id="ath:AT5G54010"/>
<dbReference type="Araport" id="AT5G54010"/>
<dbReference type="TAIR" id="AT5G54010">
    <property type="gene designation" value="UGT79B6"/>
</dbReference>
<dbReference type="eggNOG" id="KOG1192">
    <property type="taxonomic scope" value="Eukaryota"/>
</dbReference>
<dbReference type="HOGENOM" id="CLU_001724_2_3_1"/>
<dbReference type="InParanoid" id="Q9FN26"/>
<dbReference type="OMA" id="YERIMIG"/>
<dbReference type="PhylomeDB" id="Q9FN26"/>
<dbReference type="BioCyc" id="ARA:AT5G54010-MONOMER"/>
<dbReference type="PRO" id="PR:Q9FN26"/>
<dbReference type="Proteomes" id="UP000006548">
    <property type="component" value="Chromosome 5"/>
</dbReference>
<dbReference type="ExpressionAtlas" id="Q9FN26">
    <property type="expression patterns" value="baseline and differential"/>
</dbReference>
<dbReference type="GO" id="GO:0035251">
    <property type="term" value="F:UDP-glucosyltransferase activity"/>
    <property type="evidence" value="ECO:0000314"/>
    <property type="project" value="TAIR"/>
</dbReference>
<dbReference type="CDD" id="cd03784">
    <property type="entry name" value="GT1_Gtf-like"/>
    <property type="match status" value="1"/>
</dbReference>
<dbReference type="FunFam" id="3.40.50.2000:FF:000037">
    <property type="entry name" value="Glycosyltransferase"/>
    <property type="match status" value="1"/>
</dbReference>
<dbReference type="FunFam" id="3.40.50.2000:FF:000087">
    <property type="entry name" value="Glycosyltransferase"/>
    <property type="match status" value="1"/>
</dbReference>
<dbReference type="Gene3D" id="3.40.50.2000">
    <property type="entry name" value="Glycogen Phosphorylase B"/>
    <property type="match status" value="2"/>
</dbReference>
<dbReference type="InterPro" id="IPR050481">
    <property type="entry name" value="UDP-glycosyltransf_plant"/>
</dbReference>
<dbReference type="InterPro" id="IPR002213">
    <property type="entry name" value="UDP_glucos_trans"/>
</dbReference>
<dbReference type="InterPro" id="IPR035595">
    <property type="entry name" value="UDP_glycos_trans_CS"/>
</dbReference>
<dbReference type="PANTHER" id="PTHR48049">
    <property type="entry name" value="GLYCOSYLTRANSFERASE"/>
    <property type="match status" value="1"/>
</dbReference>
<dbReference type="PANTHER" id="PTHR48049:SF77">
    <property type="entry name" value="UDP-GLYCOSYLTRANSFERASE 79B6"/>
    <property type="match status" value="1"/>
</dbReference>
<dbReference type="Pfam" id="PF00201">
    <property type="entry name" value="UDPGT"/>
    <property type="match status" value="1"/>
</dbReference>
<dbReference type="SUPFAM" id="SSF53756">
    <property type="entry name" value="UDP-Glycosyltransferase/glycogen phosphorylase"/>
    <property type="match status" value="1"/>
</dbReference>
<dbReference type="PROSITE" id="PS00375">
    <property type="entry name" value="UDPGT"/>
    <property type="match status" value="1"/>
</dbReference>
<protein>
    <recommendedName>
        <fullName>UDP-glycosyltransferase 79B6</fullName>
        <ecNumber>2.4.1.-</ecNumber>
    </recommendedName>
</protein>
<feature type="chain" id="PRO_0000409112" description="UDP-glycosyltransferase 79B6">
    <location>
        <begin position="1"/>
        <end position="453"/>
    </location>
</feature>
<feature type="binding site" evidence="1">
    <location>
        <position position="266"/>
    </location>
    <ligand>
        <name>UDP-alpha-D-glucose</name>
        <dbReference type="ChEBI" id="CHEBI:58885"/>
    </ligand>
</feature>
<feature type="binding site" evidence="1">
    <location>
        <begin position="325"/>
        <end position="327"/>
    </location>
    <ligand>
        <name>UDP-alpha-D-glucose</name>
        <dbReference type="ChEBI" id="CHEBI:58885"/>
    </ligand>
</feature>
<feature type="binding site" evidence="1">
    <location>
        <begin position="342"/>
        <end position="350"/>
    </location>
    <ligand>
        <name>UDP-alpha-D-glucose</name>
        <dbReference type="ChEBI" id="CHEBI:58885"/>
    </ligand>
</feature>
<feature type="binding site" evidence="1">
    <location>
        <begin position="364"/>
        <end position="367"/>
    </location>
    <ligand>
        <name>UDP-alpha-D-glucose</name>
        <dbReference type="ChEBI" id="CHEBI:58885"/>
    </ligand>
</feature>
<gene>
    <name type="primary">UGT79B6</name>
    <name type="ordered locus">At5g54010</name>
    <name type="ORF">K19P17.18</name>
</gene>
<sequence length="453" mass="50831">MGSKFHAFMFPWFGFGHMTAFLHLANKLAEKDHKITFLLPKKARKQLESLNLFPDCIVFQTLTIPSVDGLPDGAETTSDIPISLGSFLASAMDRTRIQVKEAVSVGKPDLIFFDFAHWIPEIAREYGVKSVNFITISAACVAISFVPGRSQDDLGSTPPGYPSSKVLLRGHETNSLSFLSYPFGDGTSFYERIMIGLKNCDVISIRTCQEMEGKFCDFIENQFQRKVLLTGPMLPEPDNSKPLEDQWRQWLSKFDPGSVIYCALGSQIILEKDQFQELCLGMELTGLPFLVAVKPPKGSSTIQEALPKGFEERVKARGVVWGGWVQQPLILAHPSIGCFVSHCGFGSMWEALVNDCQIVFIPHLGEQILNTRLMSEELKVSVEVKREETGWFSKESLSGAVRSVMDRDSELGNWARRNHVKWKESLLRHGLMSGYLNKFVEALEKLVQNINLE</sequence>